<proteinExistence type="inferred from homology"/>
<accession>A9M8C0</accession>
<comment type="similarity">
    <text evidence="1">Belongs to the proline racemase family.</text>
</comment>
<protein>
    <recommendedName>
        <fullName>Uncharacterized protein BCAN_A0346</fullName>
    </recommendedName>
</protein>
<dbReference type="EMBL" id="CP000872">
    <property type="protein sequence ID" value="ABX61436.1"/>
    <property type="molecule type" value="Genomic_DNA"/>
</dbReference>
<dbReference type="RefSeq" id="WP_004691989.1">
    <property type="nucleotide sequence ID" value="NC_010103.1"/>
</dbReference>
<dbReference type="SMR" id="A9M8C0"/>
<dbReference type="GeneID" id="55590108"/>
<dbReference type="KEGG" id="bcs:BCAN_A0346"/>
<dbReference type="HOGENOM" id="CLU_036729_2_0_5"/>
<dbReference type="PhylomeDB" id="A9M8C0"/>
<dbReference type="Proteomes" id="UP000001385">
    <property type="component" value="Chromosome I"/>
</dbReference>
<dbReference type="GO" id="GO:0047580">
    <property type="term" value="F:4-hydroxyproline epimerase activity"/>
    <property type="evidence" value="ECO:0007669"/>
    <property type="project" value="TreeGrafter"/>
</dbReference>
<dbReference type="GO" id="GO:0050346">
    <property type="term" value="F:trans-L-3-hydroxyproline dehydratase activity"/>
    <property type="evidence" value="ECO:0007669"/>
    <property type="project" value="UniProtKB-ARBA"/>
</dbReference>
<dbReference type="FunFam" id="3.10.310.10:FF:000010">
    <property type="entry name" value="Proline racemase"/>
    <property type="match status" value="1"/>
</dbReference>
<dbReference type="Gene3D" id="3.10.310.10">
    <property type="entry name" value="Diaminopimelate Epimerase, Chain A, domain 1"/>
    <property type="match status" value="2"/>
</dbReference>
<dbReference type="InterPro" id="IPR008794">
    <property type="entry name" value="Pro_racemase_fam"/>
</dbReference>
<dbReference type="NCBIfam" id="NF047722">
    <property type="entry name" value="T3LHypDht"/>
    <property type="match status" value="1"/>
</dbReference>
<dbReference type="PANTHER" id="PTHR33442:SF5">
    <property type="entry name" value="BIFUNCTIONAL TRANS-3-HYDROXY-L-PROLINE DEHYDRATASE_2-EPIMERASE"/>
    <property type="match status" value="1"/>
</dbReference>
<dbReference type="PANTHER" id="PTHR33442">
    <property type="entry name" value="TRANS-3-HYDROXY-L-PROLINE DEHYDRATASE"/>
    <property type="match status" value="1"/>
</dbReference>
<dbReference type="Pfam" id="PF05544">
    <property type="entry name" value="Pro_racemase"/>
    <property type="match status" value="1"/>
</dbReference>
<dbReference type="PIRSF" id="PIRSF029792">
    <property type="entry name" value="Pro_racemase"/>
    <property type="match status" value="1"/>
</dbReference>
<dbReference type="SFLD" id="SFLDS00028">
    <property type="entry name" value="Proline_Racemase"/>
    <property type="match status" value="1"/>
</dbReference>
<dbReference type="SUPFAM" id="SSF54506">
    <property type="entry name" value="Diaminopimelate epimerase-like"/>
    <property type="match status" value="1"/>
</dbReference>
<gene>
    <name type="ordered locus">BCAN_A0346</name>
</gene>
<keyword id="KW-1185">Reference proteome</keyword>
<evidence type="ECO:0000305" key="1"/>
<sequence length="342" mass="36969">MRSTKVIHIVGCHAEGEVGDVIVGGVAPPPGETVWEQSRFIANDETLRNFVLNEPRGGVFRHVNLLVPPKDPRAQMGFIIMEPADTPPMSGSNSICVSTVLLDSGIIAMQEPVTHMVLEAPGGIIEVEAECRNGKAERISVRNVPSFADRLDAPLDVTGLGTIMVDTVYGGDSFVIVDAAQIGMKIEPGQARELAEIGVKITKAANEQLGFRHPERDWRHISFCQITEPVTREGDVLTGVNTVAIRPAKLDRSPTGTGCSARMAVLHAKGQMKAGERFIGKSVLGTEFHCRLDKVLELGGKPAISPIISGRAWVTGTSQLMLDPSDPFPHGYRLSDTWPRDE</sequence>
<feature type="chain" id="PRO_0000354041" description="Uncharacterized protein BCAN_A0346">
    <location>
        <begin position="1"/>
        <end position="342"/>
    </location>
</feature>
<organism>
    <name type="scientific">Brucella canis (strain ATCC 23365 / NCTC 10854 / RM-666)</name>
    <dbReference type="NCBI Taxonomy" id="483179"/>
    <lineage>
        <taxon>Bacteria</taxon>
        <taxon>Pseudomonadati</taxon>
        <taxon>Pseudomonadota</taxon>
        <taxon>Alphaproteobacteria</taxon>
        <taxon>Hyphomicrobiales</taxon>
        <taxon>Brucellaceae</taxon>
        <taxon>Brucella/Ochrobactrum group</taxon>
        <taxon>Brucella</taxon>
    </lineage>
</organism>
<reference key="1">
    <citation type="submission" date="2007-10" db="EMBL/GenBank/DDBJ databases">
        <title>Brucella canis ATCC 23365 whole genome shotgun sequencing project.</title>
        <authorList>
            <person name="Setubal J.C."/>
            <person name="Bowns C."/>
            <person name="Boyle S."/>
            <person name="Crasta O.R."/>
            <person name="Czar M.J."/>
            <person name="Dharmanolla C."/>
            <person name="Gillespie J.J."/>
            <person name="Kenyon R.W."/>
            <person name="Lu J."/>
            <person name="Mane S."/>
            <person name="Mohapatra S."/>
            <person name="Nagrani S."/>
            <person name="Purkayastha A."/>
            <person name="Rajasimha H.K."/>
            <person name="Shallom J.M."/>
            <person name="Shallom S."/>
            <person name="Shukla M."/>
            <person name="Snyder E.E."/>
            <person name="Sobral B.W."/>
            <person name="Wattam A.R."/>
            <person name="Will R."/>
            <person name="Williams K."/>
            <person name="Yoo H."/>
            <person name="Bruce D."/>
            <person name="Detter C."/>
            <person name="Munk C."/>
            <person name="Brettin T.S."/>
        </authorList>
    </citation>
    <scope>NUCLEOTIDE SEQUENCE [LARGE SCALE GENOMIC DNA]</scope>
    <source>
        <strain>ATCC 23365 / NCTC 10854 / RM-666</strain>
    </source>
</reference>
<name>Y346_BRUC2</name>